<comment type="function">
    <text evidence="2">Involved in base excision repair of DNA damaged by oxidation or by mutagenic agents. Acts as a DNA glycosylase that recognizes and removes damaged bases. Has a preference for oxidized purines, such as 7,8-dihydro-8-oxoguanine (8-oxoG). Has AP (apurinic/apyrimidinic) lyase activity and introduces nicks in the DNA strand. Cleaves the DNA backbone by beta-delta elimination to generate a single-strand break at the site of the removed base with both 3'- and 5'-phosphates.</text>
</comment>
<comment type="catalytic activity">
    <reaction evidence="2">
        <text>Hydrolysis of DNA containing ring-opened 7-methylguanine residues, releasing 2,6-diamino-4-hydroxy-5-(N-methyl)formamidopyrimidine.</text>
        <dbReference type="EC" id="3.2.2.23"/>
    </reaction>
</comment>
<comment type="catalytic activity">
    <reaction evidence="2">
        <text>2'-deoxyribonucleotide-(2'-deoxyribose 5'-phosphate)-2'-deoxyribonucleotide-DNA = a 3'-end 2'-deoxyribonucleotide-(2,3-dehydro-2,3-deoxyribose 5'-phosphate)-DNA + a 5'-end 5'-phospho-2'-deoxyribonucleoside-DNA + H(+)</text>
        <dbReference type="Rhea" id="RHEA:66592"/>
        <dbReference type="Rhea" id="RHEA-COMP:13180"/>
        <dbReference type="Rhea" id="RHEA-COMP:16897"/>
        <dbReference type="Rhea" id="RHEA-COMP:17067"/>
        <dbReference type="ChEBI" id="CHEBI:15378"/>
        <dbReference type="ChEBI" id="CHEBI:136412"/>
        <dbReference type="ChEBI" id="CHEBI:157695"/>
        <dbReference type="ChEBI" id="CHEBI:167181"/>
        <dbReference type="EC" id="4.2.99.18"/>
    </reaction>
</comment>
<comment type="cofactor">
    <cofactor evidence="2">
        <name>Zn(2+)</name>
        <dbReference type="ChEBI" id="CHEBI:29105"/>
    </cofactor>
    <text evidence="2">Binds 1 zinc ion per subunit.</text>
</comment>
<comment type="subunit">
    <text evidence="2">Monomer.</text>
</comment>
<comment type="similarity">
    <text evidence="2">Belongs to the FPG family.</text>
</comment>
<comment type="sequence caution" evidence="3">
    <conflict type="erroneous initiation">
        <sequence resource="EMBL-CDS" id="CAE80012"/>
    </conflict>
</comment>
<accession>Q6ML45</accession>
<feature type="initiator methionine" description="Removed" evidence="1">
    <location>
        <position position="1"/>
    </location>
</feature>
<feature type="chain" id="PRO_0000228418" description="Formamidopyrimidine-DNA glycosylase">
    <location>
        <begin position="2"/>
        <end position="270"/>
    </location>
</feature>
<feature type="zinc finger region" description="FPG-type" evidence="2">
    <location>
        <begin position="236"/>
        <end position="270"/>
    </location>
</feature>
<feature type="active site" description="Schiff-base intermediate with DNA" evidence="2">
    <location>
        <position position="2"/>
    </location>
</feature>
<feature type="active site" description="Proton donor" evidence="2">
    <location>
        <position position="3"/>
    </location>
</feature>
<feature type="active site" description="Proton donor; for beta-elimination activity" evidence="2">
    <location>
        <position position="59"/>
    </location>
</feature>
<feature type="active site" description="Proton donor; for delta-elimination activity" evidence="2">
    <location>
        <position position="260"/>
    </location>
</feature>
<feature type="binding site" evidence="2">
    <location>
        <position position="91"/>
    </location>
    <ligand>
        <name>DNA</name>
        <dbReference type="ChEBI" id="CHEBI:16991"/>
    </ligand>
</feature>
<feature type="binding site" evidence="2">
    <location>
        <position position="110"/>
    </location>
    <ligand>
        <name>DNA</name>
        <dbReference type="ChEBI" id="CHEBI:16991"/>
    </ligand>
</feature>
<feature type="binding site" evidence="2">
    <location>
        <position position="151"/>
    </location>
    <ligand>
        <name>DNA</name>
        <dbReference type="ChEBI" id="CHEBI:16991"/>
    </ligand>
</feature>
<evidence type="ECO:0000250" key="1"/>
<evidence type="ECO:0000255" key="2">
    <source>
        <dbReference type="HAMAP-Rule" id="MF_00103"/>
    </source>
</evidence>
<evidence type="ECO:0000305" key="3"/>
<protein>
    <recommendedName>
        <fullName evidence="2">Formamidopyrimidine-DNA glycosylase</fullName>
        <shortName evidence="2">Fapy-DNA glycosylase</shortName>
        <ecNumber evidence="2">3.2.2.23</ecNumber>
    </recommendedName>
    <alternativeName>
        <fullName evidence="2">DNA-(apurinic or apyrimidinic site) lyase MutM</fullName>
        <shortName evidence="2">AP lyase MutM</shortName>
        <ecNumber evidence="2">4.2.99.18</ecNumber>
    </alternativeName>
</protein>
<sequence length="270" mass="30125">MPELPEVEVVRRGLETILKDQPILEKVELMRKDLREPIPAKKISTLVGQPLTSIERRAKYLLLWTPKGAMLSHLGMTGTWRVAVPGDERLHDHIYLHFSGDLRLAYRDPRRFGCFDFVQDPLKHPKLADLGPEPLEAEFNGPLLWEKLRGKDVALKVALMDQKVVVGVGNIYASEALFAAGIKPTLPARKLSLERASLLVGEIKKILSQSIKAGGSSISDFAQASGESGYFQTSFRVYGRDKEPCVTCGQQVKSKVLGGRNTFWCSRCQK</sequence>
<proteinExistence type="inferred from homology"/>
<organism>
    <name type="scientific">Bdellovibrio bacteriovorus (strain ATCC 15356 / DSM 50701 / NCIMB 9529 / HD100)</name>
    <dbReference type="NCBI Taxonomy" id="264462"/>
    <lineage>
        <taxon>Bacteria</taxon>
        <taxon>Pseudomonadati</taxon>
        <taxon>Bdellovibrionota</taxon>
        <taxon>Bdellovibrionia</taxon>
        <taxon>Bdellovibrionales</taxon>
        <taxon>Pseudobdellovibrionaceae</taxon>
        <taxon>Bdellovibrio</taxon>
    </lineage>
</organism>
<gene>
    <name evidence="2" type="primary">mutM</name>
    <name evidence="2" type="synonym">fpg</name>
    <name type="ordered locus">Bd2176</name>
</gene>
<dbReference type="EC" id="3.2.2.23" evidence="2"/>
<dbReference type="EC" id="4.2.99.18" evidence="2"/>
<dbReference type="EMBL" id="BX842651">
    <property type="protein sequence ID" value="CAE80012.1"/>
    <property type="status" value="ALT_INIT"/>
    <property type="molecule type" value="Genomic_DNA"/>
</dbReference>
<dbReference type="RefSeq" id="WP_038449462.1">
    <property type="nucleotide sequence ID" value="NC_005363.1"/>
</dbReference>
<dbReference type="SMR" id="Q6ML45"/>
<dbReference type="STRING" id="264462.Bd2176"/>
<dbReference type="GeneID" id="93013115"/>
<dbReference type="KEGG" id="bba:Bd2176"/>
<dbReference type="eggNOG" id="COG0266">
    <property type="taxonomic scope" value="Bacteria"/>
</dbReference>
<dbReference type="HOGENOM" id="CLU_038423_1_1_7"/>
<dbReference type="Proteomes" id="UP000008080">
    <property type="component" value="Chromosome"/>
</dbReference>
<dbReference type="GO" id="GO:0034039">
    <property type="term" value="F:8-oxo-7,8-dihydroguanine DNA N-glycosylase activity"/>
    <property type="evidence" value="ECO:0007669"/>
    <property type="project" value="TreeGrafter"/>
</dbReference>
<dbReference type="GO" id="GO:0140078">
    <property type="term" value="F:class I DNA-(apurinic or apyrimidinic site) endonuclease activity"/>
    <property type="evidence" value="ECO:0007669"/>
    <property type="project" value="UniProtKB-EC"/>
</dbReference>
<dbReference type="GO" id="GO:0003684">
    <property type="term" value="F:damaged DNA binding"/>
    <property type="evidence" value="ECO:0007669"/>
    <property type="project" value="InterPro"/>
</dbReference>
<dbReference type="GO" id="GO:0008270">
    <property type="term" value="F:zinc ion binding"/>
    <property type="evidence" value="ECO:0007669"/>
    <property type="project" value="UniProtKB-UniRule"/>
</dbReference>
<dbReference type="GO" id="GO:0006284">
    <property type="term" value="P:base-excision repair"/>
    <property type="evidence" value="ECO:0007669"/>
    <property type="project" value="InterPro"/>
</dbReference>
<dbReference type="CDD" id="cd08966">
    <property type="entry name" value="EcFpg-like_N"/>
    <property type="match status" value="1"/>
</dbReference>
<dbReference type="FunFam" id="1.10.8.50:FF:000003">
    <property type="entry name" value="Formamidopyrimidine-DNA glycosylase"/>
    <property type="match status" value="1"/>
</dbReference>
<dbReference type="Gene3D" id="1.10.8.50">
    <property type="match status" value="1"/>
</dbReference>
<dbReference type="Gene3D" id="3.20.190.10">
    <property type="entry name" value="MutM-like, N-terminal"/>
    <property type="match status" value="1"/>
</dbReference>
<dbReference type="HAMAP" id="MF_00103">
    <property type="entry name" value="Fapy_DNA_glycosyl"/>
    <property type="match status" value="1"/>
</dbReference>
<dbReference type="InterPro" id="IPR015886">
    <property type="entry name" value="DNA_glyclase/AP_lyase_DNA-bd"/>
</dbReference>
<dbReference type="InterPro" id="IPR015887">
    <property type="entry name" value="DNA_glyclase_Znf_dom_DNA_BS"/>
</dbReference>
<dbReference type="InterPro" id="IPR020629">
    <property type="entry name" value="Formamido-pyr_DNA_Glyclase"/>
</dbReference>
<dbReference type="InterPro" id="IPR012319">
    <property type="entry name" value="FPG_cat"/>
</dbReference>
<dbReference type="InterPro" id="IPR035937">
    <property type="entry name" value="MutM-like_N-ter"/>
</dbReference>
<dbReference type="InterPro" id="IPR010979">
    <property type="entry name" value="Ribosomal_uS13-like_H2TH"/>
</dbReference>
<dbReference type="InterPro" id="IPR000214">
    <property type="entry name" value="Znf_DNA_glyclase/AP_lyase"/>
</dbReference>
<dbReference type="InterPro" id="IPR010663">
    <property type="entry name" value="Znf_FPG/IleRS"/>
</dbReference>
<dbReference type="NCBIfam" id="TIGR00577">
    <property type="entry name" value="fpg"/>
    <property type="match status" value="1"/>
</dbReference>
<dbReference type="NCBIfam" id="NF002211">
    <property type="entry name" value="PRK01103.1"/>
    <property type="match status" value="1"/>
</dbReference>
<dbReference type="PANTHER" id="PTHR22993">
    <property type="entry name" value="FORMAMIDOPYRIMIDINE-DNA GLYCOSYLASE"/>
    <property type="match status" value="1"/>
</dbReference>
<dbReference type="PANTHER" id="PTHR22993:SF9">
    <property type="entry name" value="FORMAMIDOPYRIMIDINE-DNA GLYCOSYLASE"/>
    <property type="match status" value="1"/>
</dbReference>
<dbReference type="Pfam" id="PF01149">
    <property type="entry name" value="Fapy_DNA_glyco"/>
    <property type="match status" value="1"/>
</dbReference>
<dbReference type="Pfam" id="PF06831">
    <property type="entry name" value="H2TH"/>
    <property type="match status" value="1"/>
</dbReference>
<dbReference type="Pfam" id="PF06827">
    <property type="entry name" value="zf-FPG_IleRS"/>
    <property type="match status" value="1"/>
</dbReference>
<dbReference type="SMART" id="SM00898">
    <property type="entry name" value="Fapy_DNA_glyco"/>
    <property type="match status" value="1"/>
</dbReference>
<dbReference type="SMART" id="SM01232">
    <property type="entry name" value="H2TH"/>
    <property type="match status" value="1"/>
</dbReference>
<dbReference type="SUPFAM" id="SSF57716">
    <property type="entry name" value="Glucocorticoid receptor-like (DNA-binding domain)"/>
    <property type="match status" value="1"/>
</dbReference>
<dbReference type="SUPFAM" id="SSF81624">
    <property type="entry name" value="N-terminal domain of MutM-like DNA repair proteins"/>
    <property type="match status" value="1"/>
</dbReference>
<dbReference type="SUPFAM" id="SSF46946">
    <property type="entry name" value="S13-like H2TH domain"/>
    <property type="match status" value="1"/>
</dbReference>
<dbReference type="PROSITE" id="PS51068">
    <property type="entry name" value="FPG_CAT"/>
    <property type="match status" value="1"/>
</dbReference>
<dbReference type="PROSITE" id="PS01242">
    <property type="entry name" value="ZF_FPG_1"/>
    <property type="match status" value="1"/>
</dbReference>
<dbReference type="PROSITE" id="PS51066">
    <property type="entry name" value="ZF_FPG_2"/>
    <property type="match status" value="1"/>
</dbReference>
<keyword id="KW-0227">DNA damage</keyword>
<keyword id="KW-0234">DNA repair</keyword>
<keyword id="KW-0238">DNA-binding</keyword>
<keyword id="KW-0326">Glycosidase</keyword>
<keyword id="KW-0378">Hydrolase</keyword>
<keyword id="KW-0456">Lyase</keyword>
<keyword id="KW-0479">Metal-binding</keyword>
<keyword id="KW-0511">Multifunctional enzyme</keyword>
<keyword id="KW-1185">Reference proteome</keyword>
<keyword id="KW-0862">Zinc</keyword>
<keyword id="KW-0863">Zinc-finger</keyword>
<reference key="1">
    <citation type="journal article" date="2004" name="Science">
        <title>A predator unmasked: life cycle of Bdellovibrio bacteriovorus from a genomic perspective.</title>
        <authorList>
            <person name="Rendulic S."/>
            <person name="Jagtap P."/>
            <person name="Rosinus A."/>
            <person name="Eppinger M."/>
            <person name="Baar C."/>
            <person name="Lanz C."/>
            <person name="Keller H."/>
            <person name="Lambert C."/>
            <person name="Evans K.J."/>
            <person name="Goesmann A."/>
            <person name="Meyer F."/>
            <person name="Sockett R.E."/>
            <person name="Schuster S.C."/>
        </authorList>
    </citation>
    <scope>NUCLEOTIDE SEQUENCE [LARGE SCALE GENOMIC DNA]</scope>
    <source>
        <strain>ATCC 15356 / DSM 50701 / NCIMB 9529 / HD100</strain>
    </source>
</reference>
<name>FPG_BDEBA</name>